<reference key="1">
    <citation type="journal article" date="2005" name="Proc. Natl. Acad. Sci. U.S.A.">
        <title>Whole genome sequence of Staphylococcus saprophyticus reveals the pathogenesis of uncomplicated urinary tract infection.</title>
        <authorList>
            <person name="Kuroda M."/>
            <person name="Yamashita A."/>
            <person name="Hirakawa H."/>
            <person name="Kumano M."/>
            <person name="Morikawa K."/>
            <person name="Higashide M."/>
            <person name="Maruyama A."/>
            <person name="Inose Y."/>
            <person name="Matoba K."/>
            <person name="Toh H."/>
            <person name="Kuhara S."/>
            <person name="Hattori M."/>
            <person name="Ohta T."/>
        </authorList>
    </citation>
    <scope>NUCLEOTIDE SEQUENCE [LARGE SCALE GENOMIC DNA]</scope>
    <source>
        <strain>ATCC 15305 / DSM 20229 / NCIMB 8711 / NCTC 7292 / S-41</strain>
    </source>
</reference>
<protein>
    <recommendedName>
        <fullName>Putative aldehyde dehydrogenase SSP0762</fullName>
        <ecNumber>1.2.1.3</ecNumber>
    </recommendedName>
</protein>
<dbReference type="EC" id="1.2.1.3"/>
<dbReference type="EMBL" id="AP008934">
    <property type="protein sequence ID" value="BAE17907.1"/>
    <property type="molecule type" value="Genomic_DNA"/>
</dbReference>
<dbReference type="RefSeq" id="WP_011302667.1">
    <property type="nucleotide sequence ID" value="NZ_MTGA01000032.1"/>
</dbReference>
<dbReference type="SMR" id="Q49Z69"/>
<dbReference type="GeneID" id="3615827"/>
<dbReference type="KEGG" id="ssp:SSP0762"/>
<dbReference type="PATRIC" id="fig|342451.11.peg.764"/>
<dbReference type="eggNOG" id="COG1012">
    <property type="taxonomic scope" value="Bacteria"/>
</dbReference>
<dbReference type="HOGENOM" id="CLU_005391_0_2_9"/>
<dbReference type="OrthoDB" id="9762913at2"/>
<dbReference type="Proteomes" id="UP000006371">
    <property type="component" value="Chromosome"/>
</dbReference>
<dbReference type="GO" id="GO:0004029">
    <property type="term" value="F:aldehyde dehydrogenase (NAD+) activity"/>
    <property type="evidence" value="ECO:0007669"/>
    <property type="project" value="UniProtKB-EC"/>
</dbReference>
<dbReference type="CDD" id="cd07138">
    <property type="entry name" value="ALDH_CddD_SSP0762"/>
    <property type="match status" value="1"/>
</dbReference>
<dbReference type="FunFam" id="3.40.605.10:FF:000026">
    <property type="entry name" value="Aldehyde dehydrogenase, putative"/>
    <property type="match status" value="1"/>
</dbReference>
<dbReference type="FunFam" id="3.40.309.10:FF:000012">
    <property type="entry name" value="Betaine aldehyde dehydrogenase"/>
    <property type="match status" value="1"/>
</dbReference>
<dbReference type="FunFam" id="3.40.605.10:FF:000007">
    <property type="entry name" value="NAD/NADP-dependent betaine aldehyde dehydrogenase"/>
    <property type="match status" value="1"/>
</dbReference>
<dbReference type="Gene3D" id="3.40.605.10">
    <property type="entry name" value="Aldehyde Dehydrogenase, Chain A, domain 1"/>
    <property type="match status" value="1"/>
</dbReference>
<dbReference type="Gene3D" id="3.40.309.10">
    <property type="entry name" value="Aldehyde Dehydrogenase, Chain A, domain 2"/>
    <property type="match status" value="1"/>
</dbReference>
<dbReference type="InterPro" id="IPR016161">
    <property type="entry name" value="Ald_DH/histidinol_DH"/>
</dbReference>
<dbReference type="InterPro" id="IPR016163">
    <property type="entry name" value="Ald_DH_C"/>
</dbReference>
<dbReference type="InterPro" id="IPR016160">
    <property type="entry name" value="Ald_DH_CS_CYS"/>
</dbReference>
<dbReference type="InterPro" id="IPR029510">
    <property type="entry name" value="Ald_DH_CS_GLU"/>
</dbReference>
<dbReference type="InterPro" id="IPR016162">
    <property type="entry name" value="Ald_DH_N"/>
</dbReference>
<dbReference type="InterPro" id="IPR015590">
    <property type="entry name" value="Aldehyde_DH_dom"/>
</dbReference>
<dbReference type="PANTHER" id="PTHR42804">
    <property type="entry name" value="ALDEHYDE DEHYDROGENASE"/>
    <property type="match status" value="1"/>
</dbReference>
<dbReference type="PANTHER" id="PTHR42804:SF1">
    <property type="entry name" value="ALDEHYDE DEHYDROGENASE-RELATED"/>
    <property type="match status" value="1"/>
</dbReference>
<dbReference type="Pfam" id="PF00171">
    <property type="entry name" value="Aldedh"/>
    <property type="match status" value="1"/>
</dbReference>
<dbReference type="SUPFAM" id="SSF53720">
    <property type="entry name" value="ALDH-like"/>
    <property type="match status" value="1"/>
</dbReference>
<dbReference type="PROSITE" id="PS00070">
    <property type="entry name" value="ALDEHYDE_DEHYDR_CYS"/>
    <property type="match status" value="1"/>
</dbReference>
<dbReference type="PROSITE" id="PS00687">
    <property type="entry name" value="ALDEHYDE_DEHYDR_GLU"/>
    <property type="match status" value="1"/>
</dbReference>
<name>ALD1_STAS1</name>
<sequence length="475" mass="51651">MRNFTKQYINGEWVESTSGETLEVINPATEEVAGTIAKGNKEDVEKAVEAADNVYLEFRHTSVKERQDLLDQIVQEYKNRKEDLIQAITDELGAPLSVAENVHYQMGLDHFEAARDALNDFQFEERRGDDLVVKEAIGVSGLITPWNFPTNQTSLKLAAAFAAGSPVVFKPSEETPFAAIILAEIFDKVGVPKGVFNLVNGDGQGVGNPLSEHPKVRMMSFTGSGPTGSSIMKKAAEDFKKVSLELGGKSPYIILDDADIDGAASAAANKVVFNTGQVCTAGTRTIVPASIKEDFLTAVKEKFSQVKVGNPREEGTQVGPIISKKQFDQVQAYIDKGIEEGAELLYGGPGKPEGLDKGYFARPTIFNNVDNSMTIAQEEIFGPVMSVITYNDLDEAIKIANDTKYGLAGYVYGSDKDTLHKVARSIEAGTVEINEAGRKPDLPFGGYKQSGLGREWGDYGIEEFLEVKSIAGYYN</sequence>
<keyword id="KW-0520">NAD</keyword>
<keyword id="KW-0560">Oxidoreductase</keyword>
<keyword id="KW-1185">Reference proteome</keyword>
<organism>
    <name type="scientific">Staphylococcus saprophyticus subsp. saprophyticus (strain ATCC 15305 / DSM 20229 / NCIMB 8711 / NCTC 7292 / S-41)</name>
    <dbReference type="NCBI Taxonomy" id="342451"/>
    <lineage>
        <taxon>Bacteria</taxon>
        <taxon>Bacillati</taxon>
        <taxon>Bacillota</taxon>
        <taxon>Bacilli</taxon>
        <taxon>Bacillales</taxon>
        <taxon>Staphylococcaceae</taxon>
        <taxon>Staphylococcus</taxon>
    </lineage>
</organism>
<evidence type="ECO:0000250" key="1"/>
<evidence type="ECO:0000305" key="2"/>
<proteinExistence type="inferred from homology"/>
<gene>
    <name type="ordered locus">SSP0762</name>
</gene>
<comment type="catalytic activity">
    <reaction>
        <text>an aldehyde + NAD(+) + H2O = a carboxylate + NADH + 2 H(+)</text>
        <dbReference type="Rhea" id="RHEA:16185"/>
        <dbReference type="ChEBI" id="CHEBI:15377"/>
        <dbReference type="ChEBI" id="CHEBI:15378"/>
        <dbReference type="ChEBI" id="CHEBI:17478"/>
        <dbReference type="ChEBI" id="CHEBI:29067"/>
        <dbReference type="ChEBI" id="CHEBI:57540"/>
        <dbReference type="ChEBI" id="CHEBI:57945"/>
        <dbReference type="EC" id="1.2.1.3"/>
    </reaction>
</comment>
<comment type="similarity">
    <text evidence="2">Belongs to the aldehyde dehydrogenase family.</text>
</comment>
<feature type="chain" id="PRO_0000293564" description="Putative aldehyde dehydrogenase SSP0762">
    <location>
        <begin position="1"/>
        <end position="475"/>
    </location>
</feature>
<feature type="active site" evidence="1">
    <location>
        <position position="245"/>
    </location>
</feature>
<feature type="active site" evidence="1">
    <location>
        <position position="279"/>
    </location>
</feature>
<feature type="binding site" evidence="1">
    <location>
        <begin position="201"/>
        <end position="207"/>
    </location>
    <ligand>
        <name>NAD(+)</name>
        <dbReference type="ChEBI" id="CHEBI:57540"/>
    </ligand>
</feature>
<accession>Q49Z69</accession>